<name>SYFB_VIBPA</name>
<feature type="chain" id="PRO_0000126983" description="Phenylalanine--tRNA ligase beta subunit">
    <location>
        <begin position="1"/>
        <end position="801"/>
    </location>
</feature>
<feature type="domain" description="tRNA-binding" evidence="1">
    <location>
        <begin position="39"/>
        <end position="148"/>
    </location>
</feature>
<feature type="domain" description="B5" evidence="1">
    <location>
        <begin position="401"/>
        <end position="476"/>
    </location>
</feature>
<feature type="domain" description="FDX-ACB" evidence="1">
    <location>
        <begin position="707"/>
        <end position="800"/>
    </location>
</feature>
<feature type="binding site" evidence="1">
    <location>
        <position position="454"/>
    </location>
    <ligand>
        <name>Mg(2+)</name>
        <dbReference type="ChEBI" id="CHEBI:18420"/>
        <note>shared with alpha subunit</note>
    </ligand>
</feature>
<feature type="binding site" evidence="1">
    <location>
        <position position="460"/>
    </location>
    <ligand>
        <name>Mg(2+)</name>
        <dbReference type="ChEBI" id="CHEBI:18420"/>
        <note>shared with alpha subunit</note>
    </ligand>
</feature>
<feature type="binding site" evidence="1">
    <location>
        <position position="463"/>
    </location>
    <ligand>
        <name>Mg(2+)</name>
        <dbReference type="ChEBI" id="CHEBI:18420"/>
        <note>shared with alpha subunit</note>
    </ligand>
</feature>
<feature type="binding site" evidence="1">
    <location>
        <position position="464"/>
    </location>
    <ligand>
        <name>Mg(2+)</name>
        <dbReference type="ChEBI" id="CHEBI:18420"/>
        <note>shared with alpha subunit</note>
    </ligand>
</feature>
<sequence length="801" mass="87098">MKFSESWLREWVNPAVTTDELTHQITMAGLEVDDVLPVAGSFTGVKVGHVVECGQHPDADKLRVTKVDVGEEELLDIVCGAHNCRQGLKVAVATVGAVLPGDFKIKKAKLRGQPSHGMLCSFTELGIDVESDGIMELAEDAVIGTDFREFLGLDDVTVDVDLTANRADCFSIRGLAREVGVLNRADVTEPSVEAVAPSIEDKVSIEVKAPAACPRYLGRVVKNVNVQAETPLWMQEKLRRCGIRSIDPVVDITNYVLLEQGQPMHAFDLAKIEGGIVVRMAEQGEKLTLLDGSEAELNADTLVVADHNKALAIAGIFGGEESGVTTETKDVLLECAFFAPDHIRGRARSYGLHTDSSMRFERGVDYALQVSAMERATQLLVEICGGEVAPVVAVESEADLPKPNKVALRRTKLDNLLGHHIADADVVEILERLGLTVEASEEGWVAVAPTWRFDIAIEQDLIEEVGRIYGYDNIPNQNPAAALKMHNHVEADLPLKRVRDLLVDRGYHEAITYSFVEPEQQKLVVPGVEPLVLPNPISADMSAMRLGLIQGLLNTVVHNQKRQQPRVRLFEYGLRFIPCESAENGMRQEPMLAGVIAGTRGEEHWDIETNTVDFFDLKGDLEAVLELSANEKAYSFAALSPESKKANPALHPGQSAAIIVDGKEVGVIGTVHPELERKFGLNGRTIVFEIEWSAINSKVIPEAVALSKFPSNRRDIAVVVDEAVASGDIVNACLEQGGEFLKDAKLFDVYVGKGVEEGKKSLAIALTLQSLERTLEDADIAGAVDAIVAHVSEKFGAALRD</sequence>
<dbReference type="EC" id="6.1.1.20" evidence="1"/>
<dbReference type="EMBL" id="BA000031">
    <property type="protein sequence ID" value="BAC59554.1"/>
    <property type="molecule type" value="Genomic_DNA"/>
</dbReference>
<dbReference type="RefSeq" id="NP_797670.1">
    <property type="nucleotide sequence ID" value="NC_004603.1"/>
</dbReference>
<dbReference type="RefSeq" id="WP_005480596.1">
    <property type="nucleotide sequence ID" value="NC_004603.1"/>
</dbReference>
<dbReference type="SMR" id="Q87Q59"/>
<dbReference type="GeneID" id="1188796"/>
<dbReference type="KEGG" id="vpa:VP1291"/>
<dbReference type="PATRIC" id="fig|223926.6.peg.1232"/>
<dbReference type="eggNOG" id="COG0072">
    <property type="taxonomic scope" value="Bacteria"/>
</dbReference>
<dbReference type="eggNOG" id="COG0073">
    <property type="taxonomic scope" value="Bacteria"/>
</dbReference>
<dbReference type="HOGENOM" id="CLU_016891_0_0_6"/>
<dbReference type="Proteomes" id="UP000002493">
    <property type="component" value="Chromosome 1"/>
</dbReference>
<dbReference type="GO" id="GO:0009328">
    <property type="term" value="C:phenylalanine-tRNA ligase complex"/>
    <property type="evidence" value="ECO:0007669"/>
    <property type="project" value="TreeGrafter"/>
</dbReference>
<dbReference type="GO" id="GO:0005524">
    <property type="term" value="F:ATP binding"/>
    <property type="evidence" value="ECO:0007669"/>
    <property type="project" value="UniProtKB-UniRule"/>
</dbReference>
<dbReference type="GO" id="GO:0000287">
    <property type="term" value="F:magnesium ion binding"/>
    <property type="evidence" value="ECO:0007669"/>
    <property type="project" value="UniProtKB-UniRule"/>
</dbReference>
<dbReference type="GO" id="GO:0004826">
    <property type="term" value="F:phenylalanine-tRNA ligase activity"/>
    <property type="evidence" value="ECO:0007669"/>
    <property type="project" value="UniProtKB-UniRule"/>
</dbReference>
<dbReference type="GO" id="GO:0000049">
    <property type="term" value="F:tRNA binding"/>
    <property type="evidence" value="ECO:0007669"/>
    <property type="project" value="UniProtKB-KW"/>
</dbReference>
<dbReference type="GO" id="GO:0006432">
    <property type="term" value="P:phenylalanyl-tRNA aminoacylation"/>
    <property type="evidence" value="ECO:0007669"/>
    <property type="project" value="UniProtKB-UniRule"/>
</dbReference>
<dbReference type="CDD" id="cd00769">
    <property type="entry name" value="PheRS_beta_core"/>
    <property type="match status" value="1"/>
</dbReference>
<dbReference type="CDD" id="cd02796">
    <property type="entry name" value="tRNA_bind_bactPheRS"/>
    <property type="match status" value="1"/>
</dbReference>
<dbReference type="FunFam" id="2.40.50.140:FF:000045">
    <property type="entry name" value="Phenylalanine--tRNA ligase beta subunit"/>
    <property type="match status" value="1"/>
</dbReference>
<dbReference type="FunFam" id="3.30.56.10:FF:000002">
    <property type="entry name" value="Phenylalanine--tRNA ligase beta subunit"/>
    <property type="match status" value="1"/>
</dbReference>
<dbReference type="FunFam" id="3.30.70.380:FF:000001">
    <property type="entry name" value="Phenylalanine--tRNA ligase beta subunit"/>
    <property type="match status" value="1"/>
</dbReference>
<dbReference type="FunFam" id="3.30.930.10:FF:000022">
    <property type="entry name" value="Phenylalanine--tRNA ligase beta subunit"/>
    <property type="match status" value="1"/>
</dbReference>
<dbReference type="FunFam" id="3.50.40.10:FF:000001">
    <property type="entry name" value="Phenylalanine--tRNA ligase beta subunit"/>
    <property type="match status" value="1"/>
</dbReference>
<dbReference type="Gene3D" id="3.30.56.10">
    <property type="match status" value="2"/>
</dbReference>
<dbReference type="Gene3D" id="3.30.930.10">
    <property type="entry name" value="Bira Bifunctional Protein, Domain 2"/>
    <property type="match status" value="1"/>
</dbReference>
<dbReference type="Gene3D" id="3.30.70.380">
    <property type="entry name" value="Ferrodoxin-fold anticodon-binding domain"/>
    <property type="match status" value="1"/>
</dbReference>
<dbReference type="Gene3D" id="2.40.50.140">
    <property type="entry name" value="Nucleic acid-binding proteins"/>
    <property type="match status" value="1"/>
</dbReference>
<dbReference type="Gene3D" id="3.50.40.10">
    <property type="entry name" value="Phenylalanyl-trna Synthetase, Chain B, domain 3"/>
    <property type="match status" value="1"/>
</dbReference>
<dbReference type="HAMAP" id="MF_00283">
    <property type="entry name" value="Phe_tRNA_synth_beta1"/>
    <property type="match status" value="1"/>
</dbReference>
<dbReference type="InterPro" id="IPR045864">
    <property type="entry name" value="aa-tRNA-synth_II/BPL/LPL"/>
</dbReference>
<dbReference type="InterPro" id="IPR005146">
    <property type="entry name" value="B3/B4_tRNA-bd"/>
</dbReference>
<dbReference type="InterPro" id="IPR009061">
    <property type="entry name" value="DNA-bd_dom_put_sf"/>
</dbReference>
<dbReference type="InterPro" id="IPR005121">
    <property type="entry name" value="Fdx_antiC-bd"/>
</dbReference>
<dbReference type="InterPro" id="IPR036690">
    <property type="entry name" value="Fdx_antiC-bd_sf"/>
</dbReference>
<dbReference type="InterPro" id="IPR012340">
    <property type="entry name" value="NA-bd_OB-fold"/>
</dbReference>
<dbReference type="InterPro" id="IPR045060">
    <property type="entry name" value="Phe-tRNA-ligase_IIc_bsu"/>
</dbReference>
<dbReference type="InterPro" id="IPR004532">
    <property type="entry name" value="Phe-tRNA-ligase_IIc_bsu_bact"/>
</dbReference>
<dbReference type="InterPro" id="IPR020825">
    <property type="entry name" value="Phe-tRNA_synthase-like_B3/B4"/>
</dbReference>
<dbReference type="InterPro" id="IPR041616">
    <property type="entry name" value="PheRS_beta_core"/>
</dbReference>
<dbReference type="InterPro" id="IPR002547">
    <property type="entry name" value="tRNA-bd_dom"/>
</dbReference>
<dbReference type="InterPro" id="IPR033714">
    <property type="entry name" value="tRNA_bind_bactPheRS"/>
</dbReference>
<dbReference type="InterPro" id="IPR005147">
    <property type="entry name" value="tRNA_synthase_B5-dom"/>
</dbReference>
<dbReference type="NCBIfam" id="TIGR00472">
    <property type="entry name" value="pheT_bact"/>
    <property type="match status" value="1"/>
</dbReference>
<dbReference type="NCBIfam" id="NF045760">
    <property type="entry name" value="YtpR"/>
    <property type="match status" value="1"/>
</dbReference>
<dbReference type="PANTHER" id="PTHR10947:SF0">
    <property type="entry name" value="PHENYLALANINE--TRNA LIGASE BETA SUBUNIT"/>
    <property type="match status" value="1"/>
</dbReference>
<dbReference type="PANTHER" id="PTHR10947">
    <property type="entry name" value="PHENYLALANYL-TRNA SYNTHETASE BETA CHAIN AND LEUCINE-RICH REPEAT-CONTAINING PROTEIN 47"/>
    <property type="match status" value="1"/>
</dbReference>
<dbReference type="Pfam" id="PF03483">
    <property type="entry name" value="B3_4"/>
    <property type="match status" value="1"/>
</dbReference>
<dbReference type="Pfam" id="PF03484">
    <property type="entry name" value="B5"/>
    <property type="match status" value="1"/>
</dbReference>
<dbReference type="Pfam" id="PF03147">
    <property type="entry name" value="FDX-ACB"/>
    <property type="match status" value="1"/>
</dbReference>
<dbReference type="Pfam" id="PF01588">
    <property type="entry name" value="tRNA_bind"/>
    <property type="match status" value="1"/>
</dbReference>
<dbReference type="Pfam" id="PF17759">
    <property type="entry name" value="tRNA_synthFbeta"/>
    <property type="match status" value="1"/>
</dbReference>
<dbReference type="SMART" id="SM00873">
    <property type="entry name" value="B3_4"/>
    <property type="match status" value="1"/>
</dbReference>
<dbReference type="SMART" id="SM00874">
    <property type="entry name" value="B5"/>
    <property type="match status" value="1"/>
</dbReference>
<dbReference type="SMART" id="SM00896">
    <property type="entry name" value="FDX-ACB"/>
    <property type="match status" value="1"/>
</dbReference>
<dbReference type="SUPFAM" id="SSF54991">
    <property type="entry name" value="Anticodon-binding domain of PheRS"/>
    <property type="match status" value="1"/>
</dbReference>
<dbReference type="SUPFAM" id="SSF55681">
    <property type="entry name" value="Class II aaRS and biotin synthetases"/>
    <property type="match status" value="1"/>
</dbReference>
<dbReference type="SUPFAM" id="SSF50249">
    <property type="entry name" value="Nucleic acid-binding proteins"/>
    <property type="match status" value="1"/>
</dbReference>
<dbReference type="SUPFAM" id="SSF56037">
    <property type="entry name" value="PheT/TilS domain"/>
    <property type="match status" value="1"/>
</dbReference>
<dbReference type="SUPFAM" id="SSF46955">
    <property type="entry name" value="Putative DNA-binding domain"/>
    <property type="match status" value="1"/>
</dbReference>
<dbReference type="PROSITE" id="PS51483">
    <property type="entry name" value="B5"/>
    <property type="match status" value="1"/>
</dbReference>
<dbReference type="PROSITE" id="PS51447">
    <property type="entry name" value="FDX_ACB"/>
    <property type="match status" value="1"/>
</dbReference>
<dbReference type="PROSITE" id="PS50886">
    <property type="entry name" value="TRBD"/>
    <property type="match status" value="1"/>
</dbReference>
<gene>
    <name evidence="1" type="primary">pheT</name>
    <name type="ordered locus">VP1291</name>
</gene>
<organism>
    <name type="scientific">Vibrio parahaemolyticus serotype O3:K6 (strain RIMD 2210633)</name>
    <dbReference type="NCBI Taxonomy" id="223926"/>
    <lineage>
        <taxon>Bacteria</taxon>
        <taxon>Pseudomonadati</taxon>
        <taxon>Pseudomonadota</taxon>
        <taxon>Gammaproteobacteria</taxon>
        <taxon>Vibrionales</taxon>
        <taxon>Vibrionaceae</taxon>
        <taxon>Vibrio</taxon>
    </lineage>
</organism>
<accession>Q87Q59</accession>
<protein>
    <recommendedName>
        <fullName evidence="1">Phenylalanine--tRNA ligase beta subunit</fullName>
        <ecNumber evidence="1">6.1.1.20</ecNumber>
    </recommendedName>
    <alternativeName>
        <fullName evidence="1">Phenylalanyl-tRNA synthetase beta subunit</fullName>
        <shortName evidence="1">PheRS</shortName>
    </alternativeName>
</protein>
<keyword id="KW-0030">Aminoacyl-tRNA synthetase</keyword>
<keyword id="KW-0067">ATP-binding</keyword>
<keyword id="KW-0963">Cytoplasm</keyword>
<keyword id="KW-0436">Ligase</keyword>
<keyword id="KW-0460">Magnesium</keyword>
<keyword id="KW-0479">Metal-binding</keyword>
<keyword id="KW-0547">Nucleotide-binding</keyword>
<keyword id="KW-0648">Protein biosynthesis</keyword>
<keyword id="KW-0694">RNA-binding</keyword>
<keyword id="KW-0820">tRNA-binding</keyword>
<comment type="catalytic activity">
    <reaction evidence="1">
        <text>tRNA(Phe) + L-phenylalanine + ATP = L-phenylalanyl-tRNA(Phe) + AMP + diphosphate + H(+)</text>
        <dbReference type="Rhea" id="RHEA:19413"/>
        <dbReference type="Rhea" id="RHEA-COMP:9668"/>
        <dbReference type="Rhea" id="RHEA-COMP:9699"/>
        <dbReference type="ChEBI" id="CHEBI:15378"/>
        <dbReference type="ChEBI" id="CHEBI:30616"/>
        <dbReference type="ChEBI" id="CHEBI:33019"/>
        <dbReference type="ChEBI" id="CHEBI:58095"/>
        <dbReference type="ChEBI" id="CHEBI:78442"/>
        <dbReference type="ChEBI" id="CHEBI:78531"/>
        <dbReference type="ChEBI" id="CHEBI:456215"/>
        <dbReference type="EC" id="6.1.1.20"/>
    </reaction>
</comment>
<comment type="cofactor">
    <cofactor evidence="1">
        <name>Mg(2+)</name>
        <dbReference type="ChEBI" id="CHEBI:18420"/>
    </cofactor>
    <text evidence="1">Binds 2 magnesium ions per tetramer.</text>
</comment>
<comment type="subunit">
    <text evidence="1">Tetramer of two alpha and two beta subunits.</text>
</comment>
<comment type="subcellular location">
    <subcellularLocation>
        <location evidence="1">Cytoplasm</location>
    </subcellularLocation>
</comment>
<comment type="similarity">
    <text evidence="1">Belongs to the phenylalanyl-tRNA synthetase beta subunit family. Type 1 subfamily.</text>
</comment>
<evidence type="ECO:0000255" key="1">
    <source>
        <dbReference type="HAMAP-Rule" id="MF_00283"/>
    </source>
</evidence>
<reference key="1">
    <citation type="journal article" date="2003" name="Lancet">
        <title>Genome sequence of Vibrio parahaemolyticus: a pathogenic mechanism distinct from that of V. cholerae.</title>
        <authorList>
            <person name="Makino K."/>
            <person name="Oshima K."/>
            <person name="Kurokawa K."/>
            <person name="Yokoyama K."/>
            <person name="Uda T."/>
            <person name="Tagomori K."/>
            <person name="Iijima Y."/>
            <person name="Najima M."/>
            <person name="Nakano M."/>
            <person name="Yamashita A."/>
            <person name="Kubota Y."/>
            <person name="Kimura S."/>
            <person name="Yasunaga T."/>
            <person name="Honda T."/>
            <person name="Shinagawa H."/>
            <person name="Hattori M."/>
            <person name="Iida T."/>
        </authorList>
    </citation>
    <scope>NUCLEOTIDE SEQUENCE [LARGE SCALE GENOMIC DNA]</scope>
    <source>
        <strain>RIMD 2210633</strain>
    </source>
</reference>
<proteinExistence type="inferred from homology"/>